<keyword id="KW-0843">Virulence</keyword>
<accession>P0DJH1</accession>
<accession>Q56592</accession>
<sequence>MKYPRSLSWEKISSSTISIREFNRFENKKKVAIFCGYVRDKYEFNYHDRTYQWLRNNDYYVILVMPKSGILLESDLCKACDVFIERENFGYDFGSYACGLQYVNLIEGSERIDRLLFVNDSFIGPFGYCNLIEDSSEFWGNTDSNQVKYHYQSYLFGFNLEKVNLDIINNFFFSRGDIYTDDKSLVIENFELSLYEYFNGKGLRCSVLHPISVLKSDFIKQTFHFISYPYLTSKIFFYIMVIARDVNPTHQLWLQLFKRGFPFIKKELLRDNPTGYPELYKKVEEVMGSNDFNGEYKQIFKNHL</sequence>
<dbReference type="EMBL" id="AF025396">
    <property type="protein sequence ID" value="AAB81634.1"/>
    <property type="molecule type" value="Genomic_DNA"/>
</dbReference>
<dbReference type="RefSeq" id="WP_019281209.1">
    <property type="nucleotide sequence ID" value="NZ_VSLF01000001.1"/>
</dbReference>
<dbReference type="PATRIC" id="fig|882102.3.peg.425"/>
<dbReference type="InterPro" id="IPR007739">
    <property type="entry name" value="RgpF"/>
</dbReference>
<dbReference type="Pfam" id="PF05045">
    <property type="entry name" value="RgpF"/>
    <property type="match status" value="1"/>
</dbReference>
<organism>
    <name type="scientific">Vibrio anguillarum</name>
    <name type="common">Listonella anguillarum</name>
    <dbReference type="NCBI Taxonomy" id="55601"/>
    <lineage>
        <taxon>Bacteria</taxon>
        <taxon>Pseudomonadati</taxon>
        <taxon>Pseudomonadota</taxon>
        <taxon>Gammaproteobacteria</taxon>
        <taxon>Vibrionales</taxon>
        <taxon>Vibrionaceae</taxon>
        <taxon>Vibrio</taxon>
    </lineage>
</organism>
<comment type="function">
    <text evidence="1">Could be involved in the biosynthesis of a major surface antigen important for virulence.</text>
</comment>
<proteinExistence type="inferred from homology"/>
<name>VIRA_VIBAN</name>
<reference key="1">
    <citation type="submission" date="1997-09" db="EMBL/GenBank/DDBJ databases">
        <authorList>
            <person name="Jedani K.E."/>
            <person name="Stroeher U.H."/>
            <person name="Manning P.A."/>
        </authorList>
    </citation>
    <scope>NUCLEOTIDE SEQUENCE [GENOMIC DNA]</scope>
    <source>
        <strain>85-3954-2</strain>
    </source>
</reference>
<evidence type="ECO:0000250" key="1"/>
<gene>
    <name type="primary">virA</name>
</gene>
<feature type="chain" id="PRO_0000065836" description="Virulence protein VirA">
    <location>
        <begin position="1"/>
        <end position="304"/>
    </location>
</feature>
<protein>
    <recommendedName>
        <fullName>Virulence protein VirA</fullName>
    </recommendedName>
</protein>